<proteinExistence type="inferred from homology"/>
<keyword id="KW-0687">Ribonucleoprotein</keyword>
<keyword id="KW-0689">Ribosomal protein</keyword>
<keyword id="KW-0694">RNA-binding</keyword>
<keyword id="KW-0699">rRNA-binding</keyword>
<dbReference type="EMBL" id="CP000946">
    <property type="protein sequence ID" value="ACA76076.1"/>
    <property type="molecule type" value="Genomic_DNA"/>
</dbReference>
<dbReference type="RefSeq" id="WP_000447529.1">
    <property type="nucleotide sequence ID" value="NZ_MTFT01000014.1"/>
</dbReference>
<dbReference type="SMR" id="B1IPY4"/>
<dbReference type="GeneID" id="93778672"/>
<dbReference type="KEGG" id="ecl:EcolC_0398"/>
<dbReference type="HOGENOM" id="CLU_083987_3_3_6"/>
<dbReference type="GO" id="GO:0022625">
    <property type="term" value="C:cytosolic large ribosomal subunit"/>
    <property type="evidence" value="ECO:0007669"/>
    <property type="project" value="TreeGrafter"/>
</dbReference>
<dbReference type="GO" id="GO:0019843">
    <property type="term" value="F:rRNA binding"/>
    <property type="evidence" value="ECO:0007669"/>
    <property type="project" value="UniProtKB-UniRule"/>
</dbReference>
<dbReference type="GO" id="GO:0003735">
    <property type="term" value="F:structural constituent of ribosome"/>
    <property type="evidence" value="ECO:0007669"/>
    <property type="project" value="InterPro"/>
</dbReference>
<dbReference type="GO" id="GO:0006412">
    <property type="term" value="P:translation"/>
    <property type="evidence" value="ECO:0007669"/>
    <property type="project" value="UniProtKB-UniRule"/>
</dbReference>
<dbReference type="CDD" id="cd00336">
    <property type="entry name" value="Ribosomal_L22"/>
    <property type="match status" value="1"/>
</dbReference>
<dbReference type="FunFam" id="3.90.470.10:FF:000001">
    <property type="entry name" value="50S ribosomal protein L22"/>
    <property type="match status" value="1"/>
</dbReference>
<dbReference type="Gene3D" id="3.90.470.10">
    <property type="entry name" value="Ribosomal protein L22/L17"/>
    <property type="match status" value="1"/>
</dbReference>
<dbReference type="HAMAP" id="MF_01331_B">
    <property type="entry name" value="Ribosomal_uL22_B"/>
    <property type="match status" value="1"/>
</dbReference>
<dbReference type="InterPro" id="IPR001063">
    <property type="entry name" value="Ribosomal_uL22"/>
</dbReference>
<dbReference type="InterPro" id="IPR005727">
    <property type="entry name" value="Ribosomal_uL22_bac/chlpt-type"/>
</dbReference>
<dbReference type="InterPro" id="IPR047867">
    <property type="entry name" value="Ribosomal_uL22_bac/org-type"/>
</dbReference>
<dbReference type="InterPro" id="IPR018260">
    <property type="entry name" value="Ribosomal_uL22_CS"/>
</dbReference>
<dbReference type="InterPro" id="IPR036394">
    <property type="entry name" value="Ribosomal_uL22_sf"/>
</dbReference>
<dbReference type="NCBIfam" id="TIGR01044">
    <property type="entry name" value="rplV_bact"/>
    <property type="match status" value="1"/>
</dbReference>
<dbReference type="PANTHER" id="PTHR13501">
    <property type="entry name" value="CHLOROPLAST 50S RIBOSOMAL PROTEIN L22-RELATED"/>
    <property type="match status" value="1"/>
</dbReference>
<dbReference type="PANTHER" id="PTHR13501:SF8">
    <property type="entry name" value="LARGE RIBOSOMAL SUBUNIT PROTEIN UL22M"/>
    <property type="match status" value="1"/>
</dbReference>
<dbReference type="Pfam" id="PF00237">
    <property type="entry name" value="Ribosomal_L22"/>
    <property type="match status" value="1"/>
</dbReference>
<dbReference type="SUPFAM" id="SSF54843">
    <property type="entry name" value="Ribosomal protein L22"/>
    <property type="match status" value="1"/>
</dbReference>
<dbReference type="PROSITE" id="PS00464">
    <property type="entry name" value="RIBOSOMAL_L22"/>
    <property type="match status" value="1"/>
</dbReference>
<evidence type="ECO:0000255" key="1">
    <source>
        <dbReference type="HAMAP-Rule" id="MF_01331"/>
    </source>
</evidence>
<evidence type="ECO:0000305" key="2"/>
<name>RL22_ECOLC</name>
<gene>
    <name evidence="1" type="primary">rplV</name>
    <name type="ordered locus">EcolC_0398</name>
</gene>
<reference key="1">
    <citation type="submission" date="2008-02" db="EMBL/GenBank/DDBJ databases">
        <title>Complete sequence of Escherichia coli C str. ATCC 8739.</title>
        <authorList>
            <person name="Copeland A."/>
            <person name="Lucas S."/>
            <person name="Lapidus A."/>
            <person name="Glavina del Rio T."/>
            <person name="Dalin E."/>
            <person name="Tice H."/>
            <person name="Bruce D."/>
            <person name="Goodwin L."/>
            <person name="Pitluck S."/>
            <person name="Kiss H."/>
            <person name="Brettin T."/>
            <person name="Detter J.C."/>
            <person name="Han C."/>
            <person name="Kuske C.R."/>
            <person name="Schmutz J."/>
            <person name="Larimer F."/>
            <person name="Land M."/>
            <person name="Hauser L."/>
            <person name="Kyrpides N."/>
            <person name="Mikhailova N."/>
            <person name="Ingram L."/>
            <person name="Richardson P."/>
        </authorList>
    </citation>
    <scope>NUCLEOTIDE SEQUENCE [LARGE SCALE GENOMIC DNA]</scope>
    <source>
        <strain>ATCC 8739 / DSM 1576 / NBRC 3972 / NCIMB 8545 / WDCM 00012 / Crooks</strain>
    </source>
</reference>
<accession>B1IPY4</accession>
<comment type="function">
    <text evidence="1">This protein binds specifically to 23S rRNA; its binding is stimulated by other ribosomal proteins, e.g. L4, L17, and L20. It is important during the early stages of 50S assembly. It makes multiple contacts with different domains of the 23S rRNA in the assembled 50S subunit and ribosome (By similarity).</text>
</comment>
<comment type="function">
    <text evidence="1">The globular domain of the protein is located near the polypeptide exit tunnel on the outside of the subunit, while an extended beta-hairpin is found that lines the wall of the exit tunnel in the center of the 70S ribosome.</text>
</comment>
<comment type="subunit">
    <text evidence="1">Part of the 50S ribosomal subunit.</text>
</comment>
<comment type="similarity">
    <text evidence="1">Belongs to the universal ribosomal protein uL22 family.</text>
</comment>
<protein>
    <recommendedName>
        <fullName evidence="1">Large ribosomal subunit protein uL22</fullName>
    </recommendedName>
    <alternativeName>
        <fullName evidence="2">50S ribosomal protein L22</fullName>
    </alternativeName>
</protein>
<feature type="chain" id="PRO_1000086554" description="Large ribosomal subunit protein uL22">
    <location>
        <begin position="1"/>
        <end position="110"/>
    </location>
</feature>
<sequence>METIAKHRHARSSAQKVRLVADLIRGKKVSQALDILTYTNKKAAVLVKKVLESAIANAEHNDGADIDDLKVTKIFVDEGPSMKRIMPRAKGRADRILKRTSHITVVVSDR</sequence>
<organism>
    <name type="scientific">Escherichia coli (strain ATCC 8739 / DSM 1576 / NBRC 3972 / NCIMB 8545 / WDCM 00012 / Crooks)</name>
    <dbReference type="NCBI Taxonomy" id="481805"/>
    <lineage>
        <taxon>Bacteria</taxon>
        <taxon>Pseudomonadati</taxon>
        <taxon>Pseudomonadota</taxon>
        <taxon>Gammaproteobacteria</taxon>
        <taxon>Enterobacterales</taxon>
        <taxon>Enterobacteriaceae</taxon>
        <taxon>Escherichia</taxon>
    </lineage>
</organism>